<organism>
    <name type="scientific">Sinorhizobium medicae (strain WSM419)</name>
    <name type="common">Ensifer medicae</name>
    <dbReference type="NCBI Taxonomy" id="366394"/>
    <lineage>
        <taxon>Bacteria</taxon>
        <taxon>Pseudomonadati</taxon>
        <taxon>Pseudomonadota</taxon>
        <taxon>Alphaproteobacteria</taxon>
        <taxon>Hyphomicrobiales</taxon>
        <taxon>Rhizobiaceae</taxon>
        <taxon>Sinorhizobium/Ensifer group</taxon>
        <taxon>Sinorhizobium</taxon>
    </lineage>
</organism>
<reference key="1">
    <citation type="submission" date="2007-06" db="EMBL/GenBank/DDBJ databases">
        <title>Complete sequence of Sinorhizobium medicae WSM419 chromosome.</title>
        <authorList>
            <consortium name="US DOE Joint Genome Institute"/>
            <person name="Copeland A."/>
            <person name="Lucas S."/>
            <person name="Lapidus A."/>
            <person name="Barry K."/>
            <person name="Glavina del Rio T."/>
            <person name="Dalin E."/>
            <person name="Tice H."/>
            <person name="Pitluck S."/>
            <person name="Chain P."/>
            <person name="Malfatti S."/>
            <person name="Shin M."/>
            <person name="Vergez L."/>
            <person name="Schmutz J."/>
            <person name="Larimer F."/>
            <person name="Land M."/>
            <person name="Hauser L."/>
            <person name="Kyrpides N."/>
            <person name="Mikhailova N."/>
            <person name="Reeve W.G."/>
            <person name="Richardson P."/>
        </authorList>
    </citation>
    <scope>NUCLEOTIDE SEQUENCE [LARGE SCALE GENOMIC DNA]</scope>
    <source>
        <strain>WSM419</strain>
    </source>
</reference>
<accession>A6U7I6</accession>
<proteinExistence type="inferred from homology"/>
<protein>
    <recommendedName>
        <fullName evidence="1">Ribosomal RNA small subunit methyltransferase A</fullName>
        <ecNumber evidence="1">2.1.1.182</ecNumber>
    </recommendedName>
    <alternativeName>
        <fullName evidence="1">16S rRNA (adenine(1518)-N(6)/adenine(1519)-N(6))-dimethyltransferase</fullName>
    </alternativeName>
    <alternativeName>
        <fullName evidence="1">16S rRNA dimethyladenosine transferase</fullName>
    </alternativeName>
    <alternativeName>
        <fullName evidence="1">16S rRNA dimethylase</fullName>
    </alternativeName>
    <alternativeName>
        <fullName evidence="1">S-adenosylmethionine-6-N', N'-adenosyl(rRNA) dimethyltransferase</fullName>
    </alternativeName>
</protein>
<gene>
    <name evidence="1" type="primary">rsmA</name>
    <name evidence="1" type="synonym">ksgA</name>
    <name type="ordered locus">Smed_0760</name>
</gene>
<name>RSMA_SINMW</name>
<sequence>MAALDGLPPLRDVIQRHGLDAKKALGQNFLLDLNLTQKIARTAGPLEGVTVIEVGPGPGGLTRAILALGAKKVVAIERDSRCLPALAEIGAHYPERLDVVEGDALKVDFEALADGPVRIIANLPYNVGTQLLVNWLLPGRWPPFWQSMTLMFQREVGLRIVASPDDDHYGRLGVLCGWRTKASLAFDVPPQAFTPPPKVTSTVVHLEPIEVPIPCSPAVLEKVTQAAFGQRRKMLRQSLKPLGGEALLAKAGIDPKRRAETLSVEEFCRLANCL</sequence>
<evidence type="ECO:0000255" key="1">
    <source>
        <dbReference type="HAMAP-Rule" id="MF_00607"/>
    </source>
</evidence>
<comment type="function">
    <text evidence="1">Specifically dimethylates two adjacent adenosines (A1518 and A1519) in the loop of a conserved hairpin near the 3'-end of 16S rRNA in the 30S particle. May play a critical role in biogenesis of 30S subunits.</text>
</comment>
<comment type="catalytic activity">
    <reaction evidence="1">
        <text>adenosine(1518)/adenosine(1519) in 16S rRNA + 4 S-adenosyl-L-methionine = N(6)-dimethyladenosine(1518)/N(6)-dimethyladenosine(1519) in 16S rRNA + 4 S-adenosyl-L-homocysteine + 4 H(+)</text>
        <dbReference type="Rhea" id="RHEA:19609"/>
        <dbReference type="Rhea" id="RHEA-COMP:10232"/>
        <dbReference type="Rhea" id="RHEA-COMP:10233"/>
        <dbReference type="ChEBI" id="CHEBI:15378"/>
        <dbReference type="ChEBI" id="CHEBI:57856"/>
        <dbReference type="ChEBI" id="CHEBI:59789"/>
        <dbReference type="ChEBI" id="CHEBI:74411"/>
        <dbReference type="ChEBI" id="CHEBI:74493"/>
        <dbReference type="EC" id="2.1.1.182"/>
    </reaction>
</comment>
<comment type="subcellular location">
    <subcellularLocation>
        <location evidence="1">Cytoplasm</location>
    </subcellularLocation>
</comment>
<comment type="similarity">
    <text evidence="1">Belongs to the class I-like SAM-binding methyltransferase superfamily. rRNA adenine N(6)-methyltransferase family. RsmA subfamily.</text>
</comment>
<dbReference type="EC" id="2.1.1.182" evidence="1"/>
<dbReference type="EMBL" id="CP000738">
    <property type="protein sequence ID" value="ABR59616.1"/>
    <property type="molecule type" value="Genomic_DNA"/>
</dbReference>
<dbReference type="RefSeq" id="WP_011974958.1">
    <property type="nucleotide sequence ID" value="NC_009636.1"/>
</dbReference>
<dbReference type="RefSeq" id="YP_001326451.1">
    <property type="nucleotide sequence ID" value="NC_009636.1"/>
</dbReference>
<dbReference type="SMR" id="A6U7I6"/>
<dbReference type="STRING" id="366394.Smed_0760"/>
<dbReference type="KEGG" id="smd:Smed_0760"/>
<dbReference type="PATRIC" id="fig|366394.8.peg.3869"/>
<dbReference type="eggNOG" id="COG0030">
    <property type="taxonomic scope" value="Bacteria"/>
</dbReference>
<dbReference type="HOGENOM" id="CLU_041220_0_1_5"/>
<dbReference type="OrthoDB" id="9814755at2"/>
<dbReference type="Proteomes" id="UP000001108">
    <property type="component" value="Chromosome"/>
</dbReference>
<dbReference type="GO" id="GO:0005829">
    <property type="term" value="C:cytosol"/>
    <property type="evidence" value="ECO:0007669"/>
    <property type="project" value="TreeGrafter"/>
</dbReference>
<dbReference type="GO" id="GO:0052908">
    <property type="term" value="F:16S rRNA (adenine(1518)-N(6)/adenine(1519)-N(6))-dimethyltransferase activity"/>
    <property type="evidence" value="ECO:0007669"/>
    <property type="project" value="UniProtKB-EC"/>
</dbReference>
<dbReference type="GO" id="GO:0003723">
    <property type="term" value="F:RNA binding"/>
    <property type="evidence" value="ECO:0007669"/>
    <property type="project" value="UniProtKB-KW"/>
</dbReference>
<dbReference type="CDD" id="cd02440">
    <property type="entry name" value="AdoMet_MTases"/>
    <property type="match status" value="1"/>
</dbReference>
<dbReference type="FunFam" id="1.10.8.100:FF:000001">
    <property type="entry name" value="Ribosomal RNA small subunit methyltransferase A"/>
    <property type="match status" value="1"/>
</dbReference>
<dbReference type="Gene3D" id="1.10.8.100">
    <property type="entry name" value="Ribosomal RNA adenine dimethylase-like, domain 2"/>
    <property type="match status" value="1"/>
</dbReference>
<dbReference type="Gene3D" id="3.40.50.150">
    <property type="entry name" value="Vaccinia Virus protein VP39"/>
    <property type="match status" value="1"/>
</dbReference>
<dbReference type="HAMAP" id="MF_00607">
    <property type="entry name" value="16SrRNA_methyltr_A"/>
    <property type="match status" value="1"/>
</dbReference>
<dbReference type="InterPro" id="IPR001737">
    <property type="entry name" value="KsgA/Erm"/>
</dbReference>
<dbReference type="InterPro" id="IPR023165">
    <property type="entry name" value="rRNA_Ade_diMease-like_C"/>
</dbReference>
<dbReference type="InterPro" id="IPR020596">
    <property type="entry name" value="rRNA_Ade_Mease_Trfase_CS"/>
</dbReference>
<dbReference type="InterPro" id="IPR020598">
    <property type="entry name" value="rRNA_Ade_methylase_Trfase_N"/>
</dbReference>
<dbReference type="InterPro" id="IPR011530">
    <property type="entry name" value="rRNA_adenine_dimethylase"/>
</dbReference>
<dbReference type="InterPro" id="IPR029063">
    <property type="entry name" value="SAM-dependent_MTases_sf"/>
</dbReference>
<dbReference type="NCBIfam" id="TIGR00755">
    <property type="entry name" value="ksgA"/>
    <property type="match status" value="1"/>
</dbReference>
<dbReference type="PANTHER" id="PTHR11727">
    <property type="entry name" value="DIMETHYLADENOSINE TRANSFERASE"/>
    <property type="match status" value="1"/>
</dbReference>
<dbReference type="PANTHER" id="PTHR11727:SF7">
    <property type="entry name" value="DIMETHYLADENOSINE TRANSFERASE-RELATED"/>
    <property type="match status" value="1"/>
</dbReference>
<dbReference type="Pfam" id="PF00398">
    <property type="entry name" value="RrnaAD"/>
    <property type="match status" value="1"/>
</dbReference>
<dbReference type="SMART" id="SM00650">
    <property type="entry name" value="rADc"/>
    <property type="match status" value="1"/>
</dbReference>
<dbReference type="SUPFAM" id="SSF53335">
    <property type="entry name" value="S-adenosyl-L-methionine-dependent methyltransferases"/>
    <property type="match status" value="1"/>
</dbReference>
<dbReference type="PROSITE" id="PS01131">
    <property type="entry name" value="RRNA_A_DIMETH"/>
    <property type="match status" value="1"/>
</dbReference>
<dbReference type="PROSITE" id="PS51689">
    <property type="entry name" value="SAM_RNA_A_N6_MT"/>
    <property type="match status" value="1"/>
</dbReference>
<feature type="chain" id="PRO_1000056677" description="Ribosomal RNA small subunit methyltransferase A">
    <location>
        <begin position="1"/>
        <end position="274"/>
    </location>
</feature>
<feature type="binding site" evidence="1">
    <location>
        <position position="28"/>
    </location>
    <ligand>
        <name>S-adenosyl-L-methionine</name>
        <dbReference type="ChEBI" id="CHEBI:59789"/>
    </ligand>
</feature>
<feature type="binding site" evidence="1">
    <location>
        <position position="30"/>
    </location>
    <ligand>
        <name>S-adenosyl-L-methionine</name>
        <dbReference type="ChEBI" id="CHEBI:59789"/>
    </ligand>
</feature>
<feature type="binding site" evidence="1">
    <location>
        <position position="55"/>
    </location>
    <ligand>
        <name>S-adenosyl-L-methionine</name>
        <dbReference type="ChEBI" id="CHEBI:59789"/>
    </ligand>
</feature>
<feature type="binding site" evidence="1">
    <location>
        <position position="77"/>
    </location>
    <ligand>
        <name>S-adenosyl-L-methionine</name>
        <dbReference type="ChEBI" id="CHEBI:59789"/>
    </ligand>
</feature>
<feature type="binding site" evidence="1">
    <location>
        <position position="103"/>
    </location>
    <ligand>
        <name>S-adenosyl-L-methionine</name>
        <dbReference type="ChEBI" id="CHEBI:59789"/>
    </ligand>
</feature>
<feature type="binding site" evidence="1">
    <location>
        <position position="122"/>
    </location>
    <ligand>
        <name>S-adenosyl-L-methionine</name>
        <dbReference type="ChEBI" id="CHEBI:59789"/>
    </ligand>
</feature>
<keyword id="KW-0963">Cytoplasm</keyword>
<keyword id="KW-0489">Methyltransferase</keyword>
<keyword id="KW-0694">RNA-binding</keyword>
<keyword id="KW-0698">rRNA processing</keyword>
<keyword id="KW-0949">S-adenosyl-L-methionine</keyword>
<keyword id="KW-0808">Transferase</keyword>